<dbReference type="EMBL" id="CP000627">
    <property type="protein sequence ID" value="ABQ21537.1"/>
    <property type="molecule type" value="Genomic_DNA"/>
</dbReference>
<dbReference type="EMBL" id="CP001235">
    <property type="protein sequence ID" value="ACP08797.1"/>
    <property type="molecule type" value="Genomic_DNA"/>
</dbReference>
<dbReference type="RefSeq" id="WP_000249403.1">
    <property type="nucleotide sequence ID" value="NZ_JAACZH010000017.1"/>
</dbReference>
<dbReference type="SMR" id="A5F3E6"/>
<dbReference type="KEGG" id="vco:VC0395_A0292"/>
<dbReference type="KEGG" id="vcr:VC395_0780"/>
<dbReference type="PATRIC" id="fig|345073.21.peg.754"/>
<dbReference type="eggNOG" id="COG1160">
    <property type="taxonomic scope" value="Bacteria"/>
</dbReference>
<dbReference type="HOGENOM" id="CLU_016077_5_1_6"/>
<dbReference type="OrthoDB" id="9805918at2"/>
<dbReference type="Proteomes" id="UP000000249">
    <property type="component" value="Chromosome 2"/>
</dbReference>
<dbReference type="GO" id="GO:0016887">
    <property type="term" value="F:ATP hydrolysis activity"/>
    <property type="evidence" value="ECO:0007669"/>
    <property type="project" value="InterPro"/>
</dbReference>
<dbReference type="GO" id="GO:0005525">
    <property type="term" value="F:GTP binding"/>
    <property type="evidence" value="ECO:0007669"/>
    <property type="project" value="UniProtKB-UniRule"/>
</dbReference>
<dbReference type="GO" id="GO:0043022">
    <property type="term" value="F:ribosome binding"/>
    <property type="evidence" value="ECO:0007669"/>
    <property type="project" value="TreeGrafter"/>
</dbReference>
<dbReference type="GO" id="GO:0042254">
    <property type="term" value="P:ribosome biogenesis"/>
    <property type="evidence" value="ECO:0007669"/>
    <property type="project" value="UniProtKB-KW"/>
</dbReference>
<dbReference type="CDD" id="cd01894">
    <property type="entry name" value="EngA1"/>
    <property type="match status" value="1"/>
</dbReference>
<dbReference type="CDD" id="cd01895">
    <property type="entry name" value="EngA2"/>
    <property type="match status" value="1"/>
</dbReference>
<dbReference type="FunFam" id="3.30.300.20:FF:000004">
    <property type="entry name" value="GTPase Der"/>
    <property type="match status" value="1"/>
</dbReference>
<dbReference type="FunFam" id="3.40.50.300:FF:000040">
    <property type="entry name" value="GTPase Der"/>
    <property type="match status" value="1"/>
</dbReference>
<dbReference type="FunFam" id="3.40.50.300:FF:000057">
    <property type="entry name" value="GTPase Der"/>
    <property type="match status" value="1"/>
</dbReference>
<dbReference type="Gene3D" id="3.30.300.20">
    <property type="match status" value="1"/>
</dbReference>
<dbReference type="Gene3D" id="3.40.50.300">
    <property type="entry name" value="P-loop containing nucleotide triphosphate hydrolases"/>
    <property type="match status" value="2"/>
</dbReference>
<dbReference type="HAMAP" id="MF_00195">
    <property type="entry name" value="GTPase_Der"/>
    <property type="match status" value="1"/>
</dbReference>
<dbReference type="InterPro" id="IPR003593">
    <property type="entry name" value="AAA+_ATPase"/>
</dbReference>
<dbReference type="InterPro" id="IPR031166">
    <property type="entry name" value="G_ENGA"/>
</dbReference>
<dbReference type="InterPro" id="IPR006073">
    <property type="entry name" value="GTP-bd"/>
</dbReference>
<dbReference type="InterPro" id="IPR016484">
    <property type="entry name" value="GTPase_Der"/>
</dbReference>
<dbReference type="InterPro" id="IPR032859">
    <property type="entry name" value="KH_dom-like"/>
</dbReference>
<dbReference type="InterPro" id="IPR015946">
    <property type="entry name" value="KH_dom-like_a/b"/>
</dbReference>
<dbReference type="InterPro" id="IPR027417">
    <property type="entry name" value="P-loop_NTPase"/>
</dbReference>
<dbReference type="InterPro" id="IPR005225">
    <property type="entry name" value="Small_GTP-bd"/>
</dbReference>
<dbReference type="NCBIfam" id="TIGR03594">
    <property type="entry name" value="GTPase_EngA"/>
    <property type="match status" value="1"/>
</dbReference>
<dbReference type="NCBIfam" id="TIGR00231">
    <property type="entry name" value="small_GTP"/>
    <property type="match status" value="2"/>
</dbReference>
<dbReference type="PANTHER" id="PTHR43834">
    <property type="entry name" value="GTPASE DER"/>
    <property type="match status" value="1"/>
</dbReference>
<dbReference type="PANTHER" id="PTHR43834:SF6">
    <property type="entry name" value="GTPASE DER"/>
    <property type="match status" value="1"/>
</dbReference>
<dbReference type="Pfam" id="PF14714">
    <property type="entry name" value="KH_dom-like"/>
    <property type="match status" value="1"/>
</dbReference>
<dbReference type="Pfam" id="PF01926">
    <property type="entry name" value="MMR_HSR1"/>
    <property type="match status" value="2"/>
</dbReference>
<dbReference type="PIRSF" id="PIRSF006485">
    <property type="entry name" value="GTP-binding_EngA"/>
    <property type="match status" value="1"/>
</dbReference>
<dbReference type="PRINTS" id="PR00326">
    <property type="entry name" value="GTP1OBG"/>
</dbReference>
<dbReference type="SMART" id="SM00382">
    <property type="entry name" value="AAA"/>
    <property type="match status" value="2"/>
</dbReference>
<dbReference type="SUPFAM" id="SSF52540">
    <property type="entry name" value="P-loop containing nucleoside triphosphate hydrolases"/>
    <property type="match status" value="2"/>
</dbReference>
<dbReference type="PROSITE" id="PS51712">
    <property type="entry name" value="G_ENGA"/>
    <property type="match status" value="2"/>
</dbReference>
<organism>
    <name type="scientific">Vibrio cholerae serotype O1 (strain ATCC 39541 / Classical Ogawa 395 / O395)</name>
    <dbReference type="NCBI Taxonomy" id="345073"/>
    <lineage>
        <taxon>Bacteria</taxon>
        <taxon>Pseudomonadati</taxon>
        <taxon>Pseudomonadota</taxon>
        <taxon>Gammaproteobacteria</taxon>
        <taxon>Vibrionales</taxon>
        <taxon>Vibrionaceae</taxon>
        <taxon>Vibrio</taxon>
    </lineage>
</organism>
<gene>
    <name evidence="1" type="primary">der</name>
    <name type="synonym">engA</name>
    <name type="ordered locus">VC0395_A0292</name>
    <name type="ordered locus">VC395_0780</name>
</gene>
<keyword id="KW-0342">GTP-binding</keyword>
<keyword id="KW-0547">Nucleotide-binding</keyword>
<keyword id="KW-0677">Repeat</keyword>
<keyword id="KW-0690">Ribosome biogenesis</keyword>
<reference key="1">
    <citation type="submission" date="2007-03" db="EMBL/GenBank/DDBJ databases">
        <authorList>
            <person name="Heidelberg J."/>
        </authorList>
    </citation>
    <scope>NUCLEOTIDE SEQUENCE [LARGE SCALE GENOMIC DNA]</scope>
    <source>
        <strain>ATCC 39541 / Classical Ogawa 395 / O395</strain>
    </source>
</reference>
<reference key="2">
    <citation type="journal article" date="2008" name="PLoS ONE">
        <title>A recalibrated molecular clock and independent origins for the cholera pandemic clones.</title>
        <authorList>
            <person name="Feng L."/>
            <person name="Reeves P.R."/>
            <person name="Lan R."/>
            <person name="Ren Y."/>
            <person name="Gao C."/>
            <person name="Zhou Z."/>
            <person name="Ren Y."/>
            <person name="Cheng J."/>
            <person name="Wang W."/>
            <person name="Wang J."/>
            <person name="Qian W."/>
            <person name="Li D."/>
            <person name="Wang L."/>
        </authorList>
    </citation>
    <scope>NUCLEOTIDE SEQUENCE [LARGE SCALE GENOMIC DNA]</scope>
    <source>
        <strain>ATCC 39541 / Classical Ogawa 395 / O395</strain>
    </source>
</reference>
<protein>
    <recommendedName>
        <fullName evidence="1">GTPase Der</fullName>
    </recommendedName>
    <alternativeName>
        <fullName evidence="1">GTP-binding protein EngA</fullName>
    </alternativeName>
</protein>
<proteinExistence type="inferred from homology"/>
<comment type="function">
    <text evidence="1">GTPase that plays an essential role in the late steps of ribosome biogenesis.</text>
</comment>
<comment type="subunit">
    <text evidence="1">Associates with the 50S ribosomal subunit.</text>
</comment>
<comment type="similarity">
    <text evidence="1">Belongs to the TRAFAC class TrmE-Era-EngA-EngB-Septin-like GTPase superfamily. EngA (Der) GTPase family.</text>
</comment>
<feature type="chain" id="PRO_1000071709" description="GTPase Der">
    <location>
        <begin position="1"/>
        <end position="494"/>
    </location>
</feature>
<feature type="domain" description="EngA-type G 1">
    <location>
        <begin position="3"/>
        <end position="166"/>
    </location>
</feature>
<feature type="domain" description="EngA-type G 2">
    <location>
        <begin position="206"/>
        <end position="379"/>
    </location>
</feature>
<feature type="domain" description="KH-like" evidence="1">
    <location>
        <begin position="380"/>
        <end position="464"/>
    </location>
</feature>
<feature type="binding site" evidence="1">
    <location>
        <begin position="9"/>
        <end position="16"/>
    </location>
    <ligand>
        <name>GTP</name>
        <dbReference type="ChEBI" id="CHEBI:37565"/>
        <label>1</label>
    </ligand>
</feature>
<feature type="binding site" evidence="1">
    <location>
        <begin position="56"/>
        <end position="60"/>
    </location>
    <ligand>
        <name>GTP</name>
        <dbReference type="ChEBI" id="CHEBI:37565"/>
        <label>1</label>
    </ligand>
</feature>
<feature type="binding site" evidence="1">
    <location>
        <begin position="118"/>
        <end position="121"/>
    </location>
    <ligand>
        <name>GTP</name>
        <dbReference type="ChEBI" id="CHEBI:37565"/>
        <label>1</label>
    </ligand>
</feature>
<feature type="binding site" evidence="1">
    <location>
        <begin position="212"/>
        <end position="219"/>
    </location>
    <ligand>
        <name>GTP</name>
        <dbReference type="ChEBI" id="CHEBI:37565"/>
        <label>2</label>
    </ligand>
</feature>
<feature type="binding site" evidence="1">
    <location>
        <begin position="259"/>
        <end position="263"/>
    </location>
    <ligand>
        <name>GTP</name>
        <dbReference type="ChEBI" id="CHEBI:37565"/>
        <label>2</label>
    </ligand>
</feature>
<feature type="binding site" evidence="1">
    <location>
        <begin position="324"/>
        <end position="327"/>
    </location>
    <ligand>
        <name>GTP</name>
        <dbReference type="ChEBI" id="CHEBI:37565"/>
        <label>2</label>
    </ligand>
</feature>
<sequence length="494" mass="55638">MVPVVALVGRPNVGKSTLFNRLTRTRDALVADFPGLTRDRKYGQAKLGEHEFIVIDTGGIDGSEEGVETKMAQQSLAAIDEADVVLFMVDGRAGLTVADEAIAQHLRRIEKPAILVVNKVDGIDADAASAEFWQLGMDQMYQIAAAHGRGVGALIDRVLNPFAEQMESEQAQLEDLTNEEDPEEEQLEYSEEEAEAEYKRLQDLPIKLAIIGRPNVGKSTLTNRILGEERVVVYDMPGTTRDSIYIPMKRDEREYVLIDTAGVRRRKRINETVEKFSVVKTLQAIEDANVVLLVVDARENISDQDLSLLGFALNSGRSIVIAVNKWDGLSFDVKEHVKKELDRRLGFVDFARIHFISALHGTGVGHLFESVQEAYRSATTRVGTSVLTRIMKMATDDHQPPMVRGRRVKLKYAHAGGYNPPIIVIHGNQVNELPDSYKRYLMNYYRKSLEIMGTPIRIQFQNSENPFEGKTNKMTLSQERQRKRLMSMVKNRRK</sequence>
<accession>A5F3E6</accession>
<accession>C3LYD1</accession>
<evidence type="ECO:0000255" key="1">
    <source>
        <dbReference type="HAMAP-Rule" id="MF_00195"/>
    </source>
</evidence>
<name>DER_VIBC3</name>